<organism>
    <name type="scientific">Mesorhizobium japonicum (strain LMG 29417 / CECT 9101 / MAFF 303099)</name>
    <name type="common">Mesorhizobium loti (strain MAFF 303099)</name>
    <dbReference type="NCBI Taxonomy" id="266835"/>
    <lineage>
        <taxon>Bacteria</taxon>
        <taxon>Pseudomonadati</taxon>
        <taxon>Pseudomonadota</taxon>
        <taxon>Alphaproteobacteria</taxon>
        <taxon>Hyphomicrobiales</taxon>
        <taxon>Phyllobacteriaceae</taxon>
        <taxon>Mesorhizobium</taxon>
    </lineage>
</organism>
<keyword id="KW-0067">ATP-binding</keyword>
<keyword id="KW-0133">Cell shape</keyword>
<keyword id="KW-0961">Cell wall biogenesis/degradation</keyword>
<keyword id="KW-0963">Cytoplasm</keyword>
<keyword id="KW-0436">Ligase</keyword>
<keyword id="KW-0460">Magnesium</keyword>
<keyword id="KW-0464">Manganese</keyword>
<keyword id="KW-0479">Metal-binding</keyword>
<keyword id="KW-0547">Nucleotide-binding</keyword>
<keyword id="KW-0573">Peptidoglycan synthesis</keyword>
<dbReference type="EC" id="6.3.2.4" evidence="2"/>
<dbReference type="EMBL" id="BA000012">
    <property type="protein sequence ID" value="BAB49095.1"/>
    <property type="molecule type" value="Genomic_DNA"/>
</dbReference>
<dbReference type="RefSeq" id="WP_010910447.1">
    <property type="nucleotide sequence ID" value="NC_002678.2"/>
</dbReference>
<dbReference type="SMR" id="Q98JS0"/>
<dbReference type="KEGG" id="mlo:mll1812"/>
<dbReference type="PATRIC" id="fig|266835.9.peg.1458"/>
<dbReference type="eggNOG" id="COG1181">
    <property type="taxonomic scope" value="Bacteria"/>
</dbReference>
<dbReference type="HOGENOM" id="CLU_039268_0_0_5"/>
<dbReference type="UniPathway" id="UPA00219"/>
<dbReference type="Proteomes" id="UP000000552">
    <property type="component" value="Chromosome"/>
</dbReference>
<dbReference type="GO" id="GO:0005829">
    <property type="term" value="C:cytosol"/>
    <property type="evidence" value="ECO:0007669"/>
    <property type="project" value="TreeGrafter"/>
</dbReference>
<dbReference type="GO" id="GO:0005524">
    <property type="term" value="F:ATP binding"/>
    <property type="evidence" value="ECO:0007669"/>
    <property type="project" value="UniProtKB-KW"/>
</dbReference>
<dbReference type="GO" id="GO:0008716">
    <property type="term" value="F:D-alanine-D-alanine ligase activity"/>
    <property type="evidence" value="ECO:0007669"/>
    <property type="project" value="UniProtKB-UniRule"/>
</dbReference>
<dbReference type="GO" id="GO:0046872">
    <property type="term" value="F:metal ion binding"/>
    <property type="evidence" value="ECO:0007669"/>
    <property type="project" value="UniProtKB-KW"/>
</dbReference>
<dbReference type="GO" id="GO:0071555">
    <property type="term" value="P:cell wall organization"/>
    <property type="evidence" value="ECO:0007669"/>
    <property type="project" value="UniProtKB-KW"/>
</dbReference>
<dbReference type="GO" id="GO:0009252">
    <property type="term" value="P:peptidoglycan biosynthetic process"/>
    <property type="evidence" value="ECO:0007669"/>
    <property type="project" value="UniProtKB-UniRule"/>
</dbReference>
<dbReference type="GO" id="GO:0008360">
    <property type="term" value="P:regulation of cell shape"/>
    <property type="evidence" value="ECO:0007669"/>
    <property type="project" value="UniProtKB-KW"/>
</dbReference>
<dbReference type="FunFam" id="3.30.470.20:FF:000008">
    <property type="entry name" value="D-alanine--D-alanine ligase"/>
    <property type="match status" value="1"/>
</dbReference>
<dbReference type="Gene3D" id="3.40.50.20">
    <property type="match status" value="1"/>
</dbReference>
<dbReference type="Gene3D" id="3.30.1490.20">
    <property type="entry name" value="ATP-grasp fold, A domain"/>
    <property type="match status" value="1"/>
</dbReference>
<dbReference type="Gene3D" id="3.30.470.20">
    <property type="entry name" value="ATP-grasp fold, B domain"/>
    <property type="match status" value="1"/>
</dbReference>
<dbReference type="HAMAP" id="MF_00047">
    <property type="entry name" value="Dala_Dala_lig"/>
    <property type="match status" value="1"/>
</dbReference>
<dbReference type="InterPro" id="IPR011761">
    <property type="entry name" value="ATP-grasp"/>
</dbReference>
<dbReference type="InterPro" id="IPR013815">
    <property type="entry name" value="ATP_grasp_subdomain_1"/>
</dbReference>
<dbReference type="InterPro" id="IPR000291">
    <property type="entry name" value="D-Ala_lig_Van_CS"/>
</dbReference>
<dbReference type="InterPro" id="IPR005905">
    <property type="entry name" value="D_ala_D_ala"/>
</dbReference>
<dbReference type="InterPro" id="IPR011095">
    <property type="entry name" value="Dala_Dala_lig_C"/>
</dbReference>
<dbReference type="InterPro" id="IPR011127">
    <property type="entry name" value="Dala_Dala_lig_N"/>
</dbReference>
<dbReference type="InterPro" id="IPR016185">
    <property type="entry name" value="PreATP-grasp_dom_sf"/>
</dbReference>
<dbReference type="NCBIfam" id="TIGR01205">
    <property type="entry name" value="D_ala_D_alaTIGR"/>
    <property type="match status" value="1"/>
</dbReference>
<dbReference type="NCBIfam" id="NF002528">
    <property type="entry name" value="PRK01966.1-4"/>
    <property type="match status" value="1"/>
</dbReference>
<dbReference type="PANTHER" id="PTHR23132">
    <property type="entry name" value="D-ALANINE--D-ALANINE LIGASE"/>
    <property type="match status" value="1"/>
</dbReference>
<dbReference type="PANTHER" id="PTHR23132:SF25">
    <property type="entry name" value="D-ALANINE--D-ALANINE LIGASE A"/>
    <property type="match status" value="1"/>
</dbReference>
<dbReference type="Pfam" id="PF07478">
    <property type="entry name" value="Dala_Dala_lig_C"/>
    <property type="match status" value="1"/>
</dbReference>
<dbReference type="Pfam" id="PF01820">
    <property type="entry name" value="Dala_Dala_lig_N"/>
    <property type="match status" value="1"/>
</dbReference>
<dbReference type="PIRSF" id="PIRSF039102">
    <property type="entry name" value="Ddl/VanB"/>
    <property type="match status" value="1"/>
</dbReference>
<dbReference type="SUPFAM" id="SSF56059">
    <property type="entry name" value="Glutathione synthetase ATP-binding domain-like"/>
    <property type="match status" value="1"/>
</dbReference>
<dbReference type="SUPFAM" id="SSF52440">
    <property type="entry name" value="PreATP-grasp domain"/>
    <property type="match status" value="1"/>
</dbReference>
<dbReference type="PROSITE" id="PS50975">
    <property type="entry name" value="ATP_GRASP"/>
    <property type="match status" value="1"/>
</dbReference>
<dbReference type="PROSITE" id="PS00843">
    <property type="entry name" value="DALA_DALA_LIGASE_1"/>
    <property type="match status" value="1"/>
</dbReference>
<dbReference type="PROSITE" id="PS00844">
    <property type="entry name" value="DALA_DALA_LIGASE_2"/>
    <property type="match status" value="1"/>
</dbReference>
<comment type="function">
    <text evidence="2">Cell wall formation.</text>
</comment>
<comment type="catalytic activity">
    <reaction evidence="2">
        <text>2 D-alanine + ATP = D-alanyl-D-alanine + ADP + phosphate + H(+)</text>
        <dbReference type="Rhea" id="RHEA:11224"/>
        <dbReference type="ChEBI" id="CHEBI:15378"/>
        <dbReference type="ChEBI" id="CHEBI:30616"/>
        <dbReference type="ChEBI" id="CHEBI:43474"/>
        <dbReference type="ChEBI" id="CHEBI:57416"/>
        <dbReference type="ChEBI" id="CHEBI:57822"/>
        <dbReference type="ChEBI" id="CHEBI:456216"/>
        <dbReference type="EC" id="6.3.2.4"/>
    </reaction>
</comment>
<comment type="cofactor">
    <cofactor evidence="1">
        <name>Mg(2+)</name>
        <dbReference type="ChEBI" id="CHEBI:18420"/>
    </cofactor>
    <cofactor evidence="1">
        <name>Mn(2+)</name>
        <dbReference type="ChEBI" id="CHEBI:29035"/>
    </cofactor>
    <text evidence="1">Binds 2 magnesium or manganese ions per subunit.</text>
</comment>
<comment type="pathway">
    <text evidence="2">Cell wall biogenesis; peptidoglycan biosynthesis.</text>
</comment>
<comment type="subcellular location">
    <subcellularLocation>
        <location evidence="2">Cytoplasm</location>
    </subcellularLocation>
</comment>
<comment type="similarity">
    <text evidence="2">Belongs to the D-alanine--D-alanine ligase family.</text>
</comment>
<feature type="chain" id="PRO_0000177862" description="D-alanine--D-alanine ligase A">
    <location>
        <begin position="1"/>
        <end position="357"/>
    </location>
</feature>
<feature type="domain" description="ATP-grasp" evidence="2">
    <location>
        <begin position="143"/>
        <end position="348"/>
    </location>
</feature>
<feature type="binding site" evidence="2">
    <location>
        <begin position="171"/>
        <end position="226"/>
    </location>
    <ligand>
        <name>ATP</name>
        <dbReference type="ChEBI" id="CHEBI:30616"/>
    </ligand>
</feature>
<feature type="binding site" evidence="2">
    <location>
        <position position="302"/>
    </location>
    <ligand>
        <name>Mg(2+)</name>
        <dbReference type="ChEBI" id="CHEBI:18420"/>
        <label>1</label>
    </ligand>
</feature>
<feature type="binding site" evidence="2">
    <location>
        <position position="315"/>
    </location>
    <ligand>
        <name>Mg(2+)</name>
        <dbReference type="ChEBI" id="CHEBI:18420"/>
        <label>1</label>
    </ligand>
</feature>
<feature type="binding site" evidence="2">
    <location>
        <position position="315"/>
    </location>
    <ligand>
        <name>Mg(2+)</name>
        <dbReference type="ChEBI" id="CHEBI:18420"/>
        <label>2</label>
    </ligand>
</feature>
<feature type="binding site" evidence="2">
    <location>
        <position position="317"/>
    </location>
    <ligand>
        <name>Mg(2+)</name>
        <dbReference type="ChEBI" id="CHEBI:18420"/>
        <label>2</label>
    </ligand>
</feature>
<accession>Q98JS0</accession>
<sequence length="357" mass="37875">MKEKTRVAILYGGRSAEHDVSRLSAANVLKAIDRTRYEVVPIAISRDGRWRLQPSSEAGADGAGAQVPEDGVEVALLPGGKGRLVALTKNGEQPDPVDVVFPVLHGPFGEDGSVQGYAEVADVAYVGCGILASAAAMDKDVAKRLLREAGLAVARSVTVLKGDVGSFQEIAGALGLPFFAKPARQGSSFGVSKVHDRDGFEQAVETALRYDSKALIEEFVDGREIECSVLERADGSLTVSPPGEIIPADKHGFYTYEAKYFDAEGAVVKVPADVPADVVARTSEMAARAFRALGCEAMARVDFFLRADGSLLVNEVNTLPGFTDISMYAKALAAAGIGYSKVIDVLIEHALARHRAR</sequence>
<reference key="1">
    <citation type="journal article" date="2000" name="DNA Res.">
        <title>Complete genome structure of the nitrogen-fixing symbiotic bacterium Mesorhizobium loti.</title>
        <authorList>
            <person name="Kaneko T."/>
            <person name="Nakamura Y."/>
            <person name="Sato S."/>
            <person name="Asamizu E."/>
            <person name="Kato T."/>
            <person name="Sasamoto S."/>
            <person name="Watanabe A."/>
            <person name="Idesawa K."/>
            <person name="Ishikawa A."/>
            <person name="Kawashima K."/>
            <person name="Kimura T."/>
            <person name="Kishida Y."/>
            <person name="Kiyokawa C."/>
            <person name="Kohara M."/>
            <person name="Matsumoto M."/>
            <person name="Matsuno A."/>
            <person name="Mochizuki Y."/>
            <person name="Nakayama S."/>
            <person name="Nakazaki N."/>
            <person name="Shimpo S."/>
            <person name="Sugimoto M."/>
            <person name="Takeuchi C."/>
            <person name="Yamada M."/>
            <person name="Tabata S."/>
        </authorList>
    </citation>
    <scope>NUCLEOTIDE SEQUENCE [LARGE SCALE GENOMIC DNA]</scope>
    <source>
        <strain>LMG 29417 / CECT 9101 / MAFF 303099</strain>
    </source>
</reference>
<name>DDLA_RHILO</name>
<proteinExistence type="inferred from homology"/>
<protein>
    <recommendedName>
        <fullName evidence="2">D-alanine--D-alanine ligase A</fullName>
        <ecNumber evidence="2">6.3.2.4</ecNumber>
    </recommendedName>
    <alternativeName>
        <fullName evidence="2">D-Ala-D-Ala ligase A</fullName>
    </alternativeName>
    <alternativeName>
        <fullName evidence="2">D-alanylalanine synthetase A</fullName>
    </alternativeName>
</protein>
<gene>
    <name evidence="2" type="primary">ddlA</name>
    <name type="ordered locus">mll1812</name>
</gene>
<evidence type="ECO:0000250" key="1"/>
<evidence type="ECO:0000255" key="2">
    <source>
        <dbReference type="HAMAP-Rule" id="MF_00047"/>
    </source>
</evidence>